<feature type="chain" id="PRO_0000077740" description="Tail fiber protein">
    <location>
        <begin position="1"/>
        <end position="774"/>
    </location>
</feature>
<feature type="region of interest" description="Disordered" evidence="1">
    <location>
        <begin position="159"/>
        <end position="178"/>
    </location>
</feature>
<feature type="region of interest" description="Disordered" evidence="1">
    <location>
        <begin position="240"/>
        <end position="295"/>
    </location>
</feature>
<feature type="region of interest" description="Disordered" evidence="1">
    <location>
        <begin position="589"/>
        <end position="615"/>
    </location>
</feature>
<feature type="compositionally biased region" description="Low complexity" evidence="1">
    <location>
        <begin position="248"/>
        <end position="274"/>
    </location>
</feature>
<feature type="compositionally biased region" description="Low complexity" evidence="1">
    <location>
        <begin position="281"/>
        <end position="295"/>
    </location>
</feature>
<feature type="compositionally biased region" description="Polar residues" evidence="1">
    <location>
        <begin position="603"/>
        <end position="615"/>
    </location>
</feature>
<protein>
    <recommendedName>
        <fullName evidence="2">Tail fiber protein</fullName>
        <shortName>stf</shortName>
    </recommendedName>
    <alternativeName>
        <fullName evidence="2">Gene product 27</fullName>
        <shortName>gp27</shortName>
    </alternativeName>
</protein>
<keyword id="KW-0945">Host-virus interaction</keyword>
<keyword id="KW-0426">Late protein</keyword>
<keyword id="KW-1185">Reference proteome</keyword>
<keyword id="KW-1233">Viral attachment to host adhesion receptor</keyword>
<keyword id="KW-1161">Viral attachment to host cell</keyword>
<keyword id="KW-1230">Viral tail fiber protein</keyword>
<keyword id="KW-1227">Viral tail protein</keyword>
<keyword id="KW-0946">Virion</keyword>
<keyword id="KW-1160">Virus entry into host cell</keyword>
<organismHost>
    <name type="scientific">Escherichia coli</name>
    <dbReference type="NCBI Taxonomy" id="562"/>
</organismHost>
<accession>P03764</accession>
<accession>P03745</accession>
<organism>
    <name type="scientific">Escherichia phage lambda</name>
    <name type="common">Bacteriophage lambda</name>
    <dbReference type="NCBI Taxonomy" id="2681611"/>
    <lineage>
        <taxon>Viruses</taxon>
        <taxon>Duplodnaviria</taxon>
        <taxon>Heunggongvirae</taxon>
        <taxon>Uroviricota</taxon>
        <taxon>Caudoviricetes</taxon>
        <taxon>Lambdavirus</taxon>
        <taxon>Lambdavirus lambda</taxon>
    </lineage>
</organism>
<evidence type="ECO:0000256" key="1">
    <source>
        <dbReference type="SAM" id="MobiDB-lite"/>
    </source>
</evidence>
<evidence type="ECO:0000305" key="2"/>
<sequence length="774" mass="77528">MAVKISGVLKDGTGKPVQNCTIQLKARRNSTTVVVNTVGSENPDEAGRYSMDVEYGQYSVILQVDGFPPSHAGTITVYEDSQPGTLNDFLCAMTEDDARPEVLRRLELMVEEVARNASVVAQSTADAKKSAGDASASAAQVAALVTDATDSARAASTSAGQAASSAQEASSGAEAASAKATEAEKSAAAAESSKNAAATSAGAAKTSETNAAASQQSAATSASTAATKASEAATSARDAVASKEAAKSSETNASSSAGRAASSATAAENSARAAKTSETNARSSETAAERSASAAADAKTAAAGSASTASTKATEAAGSAVSASQSKSAAEAAAIRAKNSAKRAEDIASAVALEDADTTRKGIVQLSSATNSTSETLAATPKAVKVVMDETNRKAPLDSPALTGTPTAPTALRGTNNTQIANTAFVLAAIADVIDASPDALNTLNELAAALGNDPDFATTMTNALAGKQPKNATLTALAGLSTAKNKLPYFAENDAASLTELTQVGRDILAKNSVADVLEYLGAGENSAFPAGAPIPWPSDIVPSGYVLMQGQAFDKSAYPKLAVAYPSGVLPDMRGWTIKGKPASGRAVLSQEQDGIKSHTHSASASGTDLGTKTTSSFDYGTKTTGSFDYGTKSTNNTGAHAHSLSGSTGAAGAHAHTSGLRMNSSGWSQYGTATITGSLSTVKGTSTQGIAYLSKTDSQGSHSHSLSGTAVSAGAHAHTVGIGAHQHPVVIGAHAHSFSIGSHGHTITVNAAGNAENTVKNIAFNYIVRLA</sequence>
<reference key="1">
    <citation type="journal article" date="1982" name="J. Mol. Biol.">
        <title>Nucleotide sequence of bacteriophage lambda DNA.</title>
        <authorList>
            <person name="Sanger F."/>
            <person name="Coulson A.R."/>
            <person name="Hong G.F."/>
            <person name="Hill D.F."/>
            <person name="Petersen G.B."/>
        </authorList>
    </citation>
    <scope>NUCLEOTIDE SEQUENCE [LARGE SCALE GENOMIC DNA]</scope>
</reference>
<reference key="2">
    <citation type="journal article" date="1992" name="J. Bacteriol.">
        <title>DNA sequences of the tail fiber genes of bacteriophage P2: evidence for horizontal transfer of tail fiber genes among unrelated bacteriophages.</title>
        <authorList>
            <person name="Haggaard-Ljungquist E."/>
            <person name="Halling C."/>
            <person name="Calendar R."/>
        </authorList>
    </citation>
    <scope>IDENTIFICATION</scope>
</reference>
<reference key="3">
    <citation type="journal article" date="1992" name="Science">
        <title>Bacteriophage lambda PaPa: not the mother of all lambda phages.</title>
        <authorList>
            <person name="Hendrix R.W."/>
            <person name="Duda R.L."/>
        </authorList>
    </citation>
    <scope>CONCEPTUAL TRANSLATION</scope>
</reference>
<name>FIBER_LAMBD</name>
<proteinExistence type="inferred from homology"/>
<gene>
    <name type="primary">stf</name>
    <name type="ordered locus">lambdap27</name>
</gene>
<dbReference type="EMBL" id="J02459">
    <property type="protein sequence ID" value="AAA96555.1"/>
    <property type="status" value="ALT_FRAME"/>
    <property type="molecule type" value="Genomic_DNA"/>
</dbReference>
<dbReference type="EMBL" id="J02459">
    <property type="protein sequence ID" value="AAA96557.1"/>
    <property type="status" value="ALT_FRAME"/>
    <property type="molecule type" value="Genomic_DNA"/>
</dbReference>
<dbReference type="PIR" id="C43009">
    <property type="entry name" value="QXBP2L"/>
</dbReference>
<dbReference type="PIR" id="G43010">
    <property type="entry name" value="QXBP1L"/>
</dbReference>
<dbReference type="SMR" id="P03764"/>
<dbReference type="IntAct" id="P03764">
    <property type="interactions" value="1"/>
</dbReference>
<dbReference type="KEGG" id="vg:2703518"/>
<dbReference type="KEGG" id="vg:2703519"/>
<dbReference type="Proteomes" id="UP000001711">
    <property type="component" value="Genome"/>
</dbReference>
<dbReference type="GO" id="GO:0098024">
    <property type="term" value="C:virus tail, fiber"/>
    <property type="evidence" value="ECO:0000314"/>
    <property type="project" value="CACAO"/>
</dbReference>
<dbReference type="GO" id="GO:0005198">
    <property type="term" value="F:structural molecule activity"/>
    <property type="evidence" value="ECO:0007669"/>
    <property type="project" value="InterPro"/>
</dbReference>
<dbReference type="GO" id="GO:0098671">
    <property type="term" value="P:adhesion receptor-mediated virion attachment to host cell"/>
    <property type="evidence" value="ECO:0007669"/>
    <property type="project" value="UniProtKB-KW"/>
</dbReference>
<dbReference type="GO" id="GO:0046813">
    <property type="term" value="P:receptor-mediated virion attachment to host cell"/>
    <property type="evidence" value="ECO:0000314"/>
    <property type="project" value="CACAO"/>
</dbReference>
<dbReference type="GO" id="GO:0046718">
    <property type="term" value="P:symbiont entry into host cell"/>
    <property type="evidence" value="ECO:0007669"/>
    <property type="project" value="UniProtKB-KW"/>
</dbReference>
<dbReference type="GO" id="GO:0019062">
    <property type="term" value="P:virion attachment to host cell"/>
    <property type="evidence" value="ECO:0000314"/>
    <property type="project" value="CACAO"/>
</dbReference>
<dbReference type="Gene3D" id="2.60.40.1120">
    <property type="entry name" value="Carboxypeptidase-like, regulatory domain"/>
    <property type="match status" value="1"/>
</dbReference>
<dbReference type="Gene3D" id="3.90.1340.10">
    <property type="entry name" value="Phage tail collar domain"/>
    <property type="match status" value="1"/>
</dbReference>
<dbReference type="InterPro" id="IPR008969">
    <property type="entry name" value="CarboxyPept-like_regulatory"/>
</dbReference>
<dbReference type="InterPro" id="IPR005003">
    <property type="entry name" value="Phage_lambda_Stf-r1"/>
</dbReference>
<dbReference type="InterPro" id="IPR005068">
    <property type="entry name" value="Phage_lambda_Stf-r2"/>
</dbReference>
<dbReference type="InterPro" id="IPR011083">
    <property type="entry name" value="Phage_tail_collar_dom"/>
</dbReference>
<dbReference type="InterPro" id="IPR037053">
    <property type="entry name" value="Phage_tail_collar_dom_sf"/>
</dbReference>
<dbReference type="InterPro" id="IPR051934">
    <property type="entry name" value="Phage_Tail_Fiber_Structural"/>
</dbReference>
<dbReference type="InterPro" id="IPR013609">
    <property type="entry name" value="Stf-like_N"/>
</dbReference>
<dbReference type="PANTHER" id="PTHR35191">
    <property type="entry name" value="PROPHAGE SIDE TAIL FIBER PROTEIN HOMOLOG STFQ-RELATED"/>
    <property type="match status" value="1"/>
</dbReference>
<dbReference type="PANTHER" id="PTHR35191:SF1">
    <property type="entry name" value="PROPHAGE SIDE TAIL FIBER PROTEIN HOMOLOG STFQ-RELATED"/>
    <property type="match status" value="1"/>
</dbReference>
<dbReference type="Pfam" id="PF07484">
    <property type="entry name" value="Collar"/>
    <property type="match status" value="1"/>
</dbReference>
<dbReference type="Pfam" id="PF03335">
    <property type="entry name" value="Phage_fiber"/>
    <property type="match status" value="5"/>
</dbReference>
<dbReference type="Pfam" id="PF03406">
    <property type="entry name" value="Phage_fiber_2"/>
    <property type="match status" value="1"/>
</dbReference>
<dbReference type="Pfam" id="PF08400">
    <property type="entry name" value="phage_tail_N"/>
    <property type="match status" value="1"/>
</dbReference>
<dbReference type="SUPFAM" id="SSF49464">
    <property type="entry name" value="Carboxypeptidase regulatory domain-like"/>
    <property type="match status" value="1"/>
</dbReference>
<dbReference type="SUPFAM" id="SSF88874">
    <property type="entry name" value="Receptor-binding domain of short tail fibre protein gp12"/>
    <property type="match status" value="2"/>
</dbReference>
<comment type="function">
    <text>Forms tail fibers that play a role in primary attachment of virion to host receptors. Assembles with Tail fiber assembly protein to form fibers attached to virion tail tip. Fibers are about 35nm long and have a thin, uniform diameter. There are presumaby six fibers per virion. They bind in a reversible manner to host molecules, attaching transiently the virion to the host until tail tip interacts with LamB and injects viral DNA into the cell.</text>
</comment>
<comment type="subunit">
    <text evidence="2">Interacts with Tail fiber assembly protein.</text>
</comment>
<comment type="subcellular location">
    <subcellularLocation>
        <location evidence="2">Virion</location>
    </subcellularLocation>
</comment>
<comment type="similarity">
    <text evidence="2">Belongs to the tail fiber family.</text>
</comment>
<comment type="caution">
    <text evidence="2">The current laboratory strain of bacteriophage lambda are descendants of a recombinant, lambdaPaPa derived from cross between strains lambda Pasadena (Caltech) and Paris (Institut Pasteur). These stains carry a frameshift mutation relative to lambda originally derived from the original K12 E-Coli strain, called Ur-lambda. The Ur-lambda virions have thin, jointed tail fibers (side tail fibers) that are absent from lambda wild-type. Relative to lambda PaPa, Ur-lambda has expanded receptor specificity and adsorbs to E.coli cells more rapidly.</text>
</comment>
<comment type="sequence caution" evidence="2">
    <conflict type="frameshift">
        <sequence resource="EMBL-CDS" id="AAA96555"/>
    </conflict>
</comment>
<comment type="sequence caution" evidence="2">
    <conflict type="frameshift">
        <sequence resource="EMBL-CDS" id="AAA96557"/>
    </conflict>
</comment>